<accession>Q9A5F0</accession>
<dbReference type="EC" id="6.3.5.3" evidence="1"/>
<dbReference type="EMBL" id="AE005673">
    <property type="protein sequence ID" value="AAK24471.1"/>
    <property type="molecule type" value="Genomic_DNA"/>
</dbReference>
<dbReference type="PIR" id="C87559">
    <property type="entry name" value="C87559"/>
</dbReference>
<dbReference type="RefSeq" id="NP_421303.1">
    <property type="nucleotide sequence ID" value="NC_002696.2"/>
</dbReference>
<dbReference type="RefSeq" id="WP_010920357.1">
    <property type="nucleotide sequence ID" value="NC_002696.2"/>
</dbReference>
<dbReference type="SMR" id="Q9A5F0"/>
<dbReference type="STRING" id="190650.CC_2500"/>
<dbReference type="EnsemblBacteria" id="AAK24471">
    <property type="protein sequence ID" value="AAK24471"/>
    <property type="gene ID" value="CC_2500"/>
</dbReference>
<dbReference type="KEGG" id="ccr:CC_2500"/>
<dbReference type="PATRIC" id="fig|190650.5.peg.2518"/>
<dbReference type="eggNOG" id="COG0046">
    <property type="taxonomic scope" value="Bacteria"/>
</dbReference>
<dbReference type="HOGENOM" id="CLU_003100_0_1_5"/>
<dbReference type="BioCyc" id="CAULO:CC2500-MONOMER"/>
<dbReference type="UniPathway" id="UPA00074">
    <property type="reaction ID" value="UER00128"/>
</dbReference>
<dbReference type="Proteomes" id="UP000001816">
    <property type="component" value="Chromosome"/>
</dbReference>
<dbReference type="GO" id="GO:0005737">
    <property type="term" value="C:cytoplasm"/>
    <property type="evidence" value="ECO:0007669"/>
    <property type="project" value="UniProtKB-SubCell"/>
</dbReference>
<dbReference type="GO" id="GO:0005524">
    <property type="term" value="F:ATP binding"/>
    <property type="evidence" value="ECO:0007669"/>
    <property type="project" value="UniProtKB-UniRule"/>
</dbReference>
<dbReference type="GO" id="GO:0000287">
    <property type="term" value="F:magnesium ion binding"/>
    <property type="evidence" value="ECO:0007669"/>
    <property type="project" value="UniProtKB-UniRule"/>
</dbReference>
<dbReference type="GO" id="GO:0004642">
    <property type="term" value="F:phosphoribosylformylglycinamidine synthase activity"/>
    <property type="evidence" value="ECO:0007669"/>
    <property type="project" value="UniProtKB-UniRule"/>
</dbReference>
<dbReference type="GO" id="GO:0006189">
    <property type="term" value="P:'de novo' IMP biosynthetic process"/>
    <property type="evidence" value="ECO:0007669"/>
    <property type="project" value="UniProtKB-UniRule"/>
</dbReference>
<dbReference type="CDD" id="cd02203">
    <property type="entry name" value="PurL_repeat1"/>
    <property type="match status" value="1"/>
</dbReference>
<dbReference type="CDD" id="cd02204">
    <property type="entry name" value="PurL_repeat2"/>
    <property type="match status" value="1"/>
</dbReference>
<dbReference type="FunFam" id="3.30.1330.10:FF:000004">
    <property type="entry name" value="Phosphoribosylformylglycinamidine synthase subunit PurL"/>
    <property type="match status" value="1"/>
</dbReference>
<dbReference type="Gene3D" id="3.90.650.10">
    <property type="entry name" value="PurM-like C-terminal domain"/>
    <property type="match status" value="2"/>
</dbReference>
<dbReference type="Gene3D" id="3.30.1330.10">
    <property type="entry name" value="PurM-like, N-terminal domain"/>
    <property type="match status" value="2"/>
</dbReference>
<dbReference type="HAMAP" id="MF_00420">
    <property type="entry name" value="PurL_2"/>
    <property type="match status" value="1"/>
</dbReference>
<dbReference type="InterPro" id="IPR010074">
    <property type="entry name" value="PRibForGlyAmidine_synth_PurL"/>
</dbReference>
<dbReference type="InterPro" id="IPR041609">
    <property type="entry name" value="PurL_linker"/>
</dbReference>
<dbReference type="InterPro" id="IPR010918">
    <property type="entry name" value="PurM-like_C_dom"/>
</dbReference>
<dbReference type="InterPro" id="IPR036676">
    <property type="entry name" value="PurM-like_C_sf"/>
</dbReference>
<dbReference type="InterPro" id="IPR016188">
    <property type="entry name" value="PurM-like_N"/>
</dbReference>
<dbReference type="InterPro" id="IPR036921">
    <property type="entry name" value="PurM-like_N_sf"/>
</dbReference>
<dbReference type="NCBIfam" id="TIGR01736">
    <property type="entry name" value="FGAM_synth_II"/>
    <property type="match status" value="1"/>
</dbReference>
<dbReference type="NCBIfam" id="NF002290">
    <property type="entry name" value="PRK01213.1"/>
    <property type="match status" value="1"/>
</dbReference>
<dbReference type="PANTHER" id="PTHR43555">
    <property type="entry name" value="PHOSPHORIBOSYLFORMYLGLYCINAMIDINE SYNTHASE SUBUNIT PURL"/>
    <property type="match status" value="1"/>
</dbReference>
<dbReference type="PANTHER" id="PTHR43555:SF1">
    <property type="entry name" value="PHOSPHORIBOSYLFORMYLGLYCINAMIDINE SYNTHASE SUBUNIT PURL"/>
    <property type="match status" value="1"/>
</dbReference>
<dbReference type="Pfam" id="PF00586">
    <property type="entry name" value="AIRS"/>
    <property type="match status" value="2"/>
</dbReference>
<dbReference type="Pfam" id="PF02769">
    <property type="entry name" value="AIRS_C"/>
    <property type="match status" value="2"/>
</dbReference>
<dbReference type="Pfam" id="PF18072">
    <property type="entry name" value="FGAR-AT_linker"/>
    <property type="match status" value="1"/>
</dbReference>
<dbReference type="PIRSF" id="PIRSF001587">
    <property type="entry name" value="FGAM_synthase_II"/>
    <property type="match status" value="1"/>
</dbReference>
<dbReference type="SUPFAM" id="SSF56042">
    <property type="entry name" value="PurM C-terminal domain-like"/>
    <property type="match status" value="2"/>
</dbReference>
<dbReference type="SUPFAM" id="SSF55326">
    <property type="entry name" value="PurM N-terminal domain-like"/>
    <property type="match status" value="2"/>
</dbReference>
<gene>
    <name evidence="1" type="primary">purL</name>
    <name type="ordered locus">CC_2500</name>
</gene>
<proteinExistence type="inferred from homology"/>
<name>PURL_CAUVC</name>
<evidence type="ECO:0000255" key="1">
    <source>
        <dbReference type="HAMAP-Rule" id="MF_00420"/>
    </source>
</evidence>
<reference key="1">
    <citation type="journal article" date="2001" name="Proc. Natl. Acad. Sci. U.S.A.">
        <title>Complete genome sequence of Caulobacter crescentus.</title>
        <authorList>
            <person name="Nierman W.C."/>
            <person name="Feldblyum T.V."/>
            <person name="Laub M.T."/>
            <person name="Paulsen I.T."/>
            <person name="Nelson K.E."/>
            <person name="Eisen J.A."/>
            <person name="Heidelberg J.F."/>
            <person name="Alley M.R.K."/>
            <person name="Ohta N."/>
            <person name="Maddock J.R."/>
            <person name="Potocka I."/>
            <person name="Nelson W.C."/>
            <person name="Newton A."/>
            <person name="Stephens C."/>
            <person name="Phadke N.D."/>
            <person name="Ely B."/>
            <person name="DeBoy R.T."/>
            <person name="Dodson R.J."/>
            <person name="Durkin A.S."/>
            <person name="Gwinn M.L."/>
            <person name="Haft D.H."/>
            <person name="Kolonay J.F."/>
            <person name="Smit J."/>
            <person name="Craven M.B."/>
            <person name="Khouri H.M."/>
            <person name="Shetty J."/>
            <person name="Berry K.J."/>
            <person name="Utterback T.R."/>
            <person name="Tran K."/>
            <person name="Wolf A.M."/>
            <person name="Vamathevan J.J."/>
            <person name="Ermolaeva M.D."/>
            <person name="White O."/>
            <person name="Salzberg S.L."/>
            <person name="Venter J.C."/>
            <person name="Shapiro L."/>
            <person name="Fraser C.M."/>
        </authorList>
    </citation>
    <scope>NUCLEOTIDE SEQUENCE [LARGE SCALE GENOMIC DNA]</scope>
    <source>
        <strain>ATCC 19089 / CIP 103742 / CB 15</strain>
    </source>
</reference>
<organism>
    <name type="scientific">Caulobacter vibrioides (strain ATCC 19089 / CIP 103742 / CB 15)</name>
    <name type="common">Caulobacter crescentus</name>
    <dbReference type="NCBI Taxonomy" id="190650"/>
    <lineage>
        <taxon>Bacteria</taxon>
        <taxon>Pseudomonadati</taxon>
        <taxon>Pseudomonadota</taxon>
        <taxon>Alphaproteobacteria</taxon>
        <taxon>Caulobacterales</taxon>
        <taxon>Caulobacteraceae</taxon>
        <taxon>Caulobacter</taxon>
    </lineage>
</organism>
<sequence length="739" mass="77704">MSTSSTPSAKPMAEMAAEFGLKPAEYDVVLKRLGREPNLVELGVFSVMWSEHCSYKSSKNQLKKFPIDGPRVICGPGENAGVIDIGDGDAIIFKMESHNHPSYIEPYQGAATGVGGIMRDVFTMGARPIALLNALRFGDPSHPKTKRLVDGVVAGIAGYGNCVGVPTVAGETNFHKGYNGNILVNAMCVGLAKADSIFYSAAPGPGLAVVYFGSKTGRDGIHGATMSSAEFSEDSEEKRPTVQVGDPFAEKLLIEATLELMATGAVAAIQDMGAAGLTSSSVEMAGKGGVGIELNMDMVPQRETGMSAYEMMLSESQERMLAVLKPGREQDGHAIFEKWGLDAAVIGYTTDTGRLVLKHHGETVCDVPLAPLFDDAPLYDRPWVQPALQPRLDPAAVPAPTNWNEAVLKIIGCPDMASKRWLWEQYDRHVMADTLEDSATGCDAGIVRIHGTGKAIAVTSDCTPRYVQADPYEGGKQAVAEAWRNLTAAGALPIAITDNLNFGSPEKPETMGQIVRATDGMAEACRALDFPVVSGNVSLYNETNGVAIPPTPTVGGVGLLEDYDLRTGFGNVAEGDTLVLVGETRGELGASIYLREILGREDGAPPPVDLALERKTGDFVRGLISSGLVAGVHDLSDGGLLVAAADVALASKIGVTLNATSQTHAHAYLLGEDQARYLIATPDPDAVLEAAKEAGVHANVAGVAGGEAFASDGLFSVSLDALRAAHEAWLPGYMSAPKA</sequence>
<feature type="chain" id="PRO_0000100448" description="Phosphoribosylformylglycinamidine synthase subunit PurL">
    <location>
        <begin position="1"/>
        <end position="739"/>
    </location>
</feature>
<feature type="active site" evidence="1">
    <location>
        <position position="52"/>
    </location>
</feature>
<feature type="active site" description="Proton acceptor" evidence="1">
    <location>
        <position position="98"/>
    </location>
</feature>
<feature type="binding site" evidence="1">
    <location>
        <position position="55"/>
    </location>
    <ligand>
        <name>ATP</name>
        <dbReference type="ChEBI" id="CHEBI:30616"/>
    </ligand>
</feature>
<feature type="binding site" evidence="1">
    <location>
        <position position="94"/>
    </location>
    <ligand>
        <name>ATP</name>
        <dbReference type="ChEBI" id="CHEBI:30616"/>
    </ligand>
</feature>
<feature type="binding site" evidence="1">
    <location>
        <position position="96"/>
    </location>
    <ligand>
        <name>Mg(2+)</name>
        <dbReference type="ChEBI" id="CHEBI:18420"/>
        <label>1</label>
    </ligand>
</feature>
<feature type="binding site" evidence="1">
    <location>
        <begin position="97"/>
        <end position="100"/>
    </location>
    <ligand>
        <name>substrate</name>
    </ligand>
</feature>
<feature type="binding site" evidence="1">
    <location>
        <position position="119"/>
    </location>
    <ligand>
        <name>substrate</name>
    </ligand>
</feature>
<feature type="binding site" evidence="1">
    <location>
        <position position="120"/>
    </location>
    <ligand>
        <name>Mg(2+)</name>
        <dbReference type="ChEBI" id="CHEBI:18420"/>
        <label>2</label>
    </ligand>
</feature>
<feature type="binding site" evidence="1">
    <location>
        <position position="243"/>
    </location>
    <ligand>
        <name>substrate</name>
    </ligand>
</feature>
<feature type="binding site" evidence="1">
    <location>
        <position position="271"/>
    </location>
    <ligand>
        <name>Mg(2+)</name>
        <dbReference type="ChEBI" id="CHEBI:18420"/>
        <label>2</label>
    </ligand>
</feature>
<feature type="binding site" evidence="1">
    <location>
        <begin position="315"/>
        <end position="317"/>
    </location>
    <ligand>
        <name>substrate</name>
    </ligand>
</feature>
<feature type="binding site" evidence="1">
    <location>
        <position position="498"/>
    </location>
    <ligand>
        <name>ATP</name>
        <dbReference type="ChEBI" id="CHEBI:30616"/>
    </ligand>
</feature>
<feature type="binding site" evidence="1">
    <location>
        <position position="535"/>
    </location>
    <ligand>
        <name>ATP</name>
        <dbReference type="ChEBI" id="CHEBI:30616"/>
    </ligand>
</feature>
<feature type="binding site" evidence="1">
    <location>
        <position position="536"/>
    </location>
    <ligand>
        <name>Mg(2+)</name>
        <dbReference type="ChEBI" id="CHEBI:18420"/>
        <label>1</label>
    </ligand>
</feature>
<feature type="binding site" evidence="1">
    <location>
        <position position="538"/>
    </location>
    <ligand>
        <name>substrate</name>
    </ligand>
</feature>
<comment type="function">
    <text evidence="1">Part of the phosphoribosylformylglycinamidine synthase complex involved in the purines biosynthetic pathway. Catalyzes the ATP-dependent conversion of formylglycinamide ribonucleotide (FGAR) and glutamine to yield formylglycinamidine ribonucleotide (FGAM) and glutamate. The FGAM synthase complex is composed of three subunits. PurQ produces an ammonia molecule by converting glutamine to glutamate. PurL transfers the ammonia molecule to FGAR to form FGAM in an ATP-dependent manner. PurS interacts with PurQ and PurL and is thought to assist in the transfer of the ammonia molecule from PurQ to PurL.</text>
</comment>
<comment type="catalytic activity">
    <reaction evidence="1">
        <text>N(2)-formyl-N(1)-(5-phospho-beta-D-ribosyl)glycinamide + L-glutamine + ATP + H2O = 2-formamido-N(1)-(5-O-phospho-beta-D-ribosyl)acetamidine + L-glutamate + ADP + phosphate + H(+)</text>
        <dbReference type="Rhea" id="RHEA:17129"/>
        <dbReference type="ChEBI" id="CHEBI:15377"/>
        <dbReference type="ChEBI" id="CHEBI:15378"/>
        <dbReference type="ChEBI" id="CHEBI:29985"/>
        <dbReference type="ChEBI" id="CHEBI:30616"/>
        <dbReference type="ChEBI" id="CHEBI:43474"/>
        <dbReference type="ChEBI" id="CHEBI:58359"/>
        <dbReference type="ChEBI" id="CHEBI:147286"/>
        <dbReference type="ChEBI" id="CHEBI:147287"/>
        <dbReference type="ChEBI" id="CHEBI:456216"/>
        <dbReference type="EC" id="6.3.5.3"/>
    </reaction>
</comment>
<comment type="pathway">
    <text evidence="1">Purine metabolism; IMP biosynthesis via de novo pathway; 5-amino-1-(5-phospho-D-ribosyl)imidazole from N(2)-formyl-N(1)-(5-phospho-D-ribosyl)glycinamide: step 1/2.</text>
</comment>
<comment type="subunit">
    <text evidence="1">Monomer. Part of the FGAM synthase complex composed of 1 PurL, 1 PurQ and 2 PurS subunits.</text>
</comment>
<comment type="subcellular location">
    <subcellularLocation>
        <location evidence="1">Cytoplasm</location>
    </subcellularLocation>
</comment>
<comment type="similarity">
    <text evidence="1">Belongs to the FGAMS family.</text>
</comment>
<keyword id="KW-0067">ATP-binding</keyword>
<keyword id="KW-0963">Cytoplasm</keyword>
<keyword id="KW-0436">Ligase</keyword>
<keyword id="KW-0460">Magnesium</keyword>
<keyword id="KW-0479">Metal-binding</keyword>
<keyword id="KW-0547">Nucleotide-binding</keyword>
<keyword id="KW-0658">Purine biosynthesis</keyword>
<keyword id="KW-1185">Reference proteome</keyword>
<protein>
    <recommendedName>
        <fullName evidence="1">Phosphoribosylformylglycinamidine synthase subunit PurL</fullName>
        <shortName evidence="1">FGAM synthase</shortName>
        <ecNumber evidence="1">6.3.5.3</ecNumber>
    </recommendedName>
    <alternativeName>
        <fullName evidence="1">Formylglycinamide ribonucleotide amidotransferase subunit II</fullName>
        <shortName evidence="1">FGAR amidotransferase II</shortName>
        <shortName evidence="1">FGAR-AT II</shortName>
    </alternativeName>
    <alternativeName>
        <fullName evidence="1">Glutamine amidotransferase PurL</fullName>
    </alternativeName>
    <alternativeName>
        <fullName evidence="1">Phosphoribosylformylglycinamidine synthase subunit II</fullName>
    </alternativeName>
</protein>